<sequence>MDGRAVAPAAGTVLNALATGVGAAFALDIDTEASVSVTPSESGVSGEIAGHPEADTALVERCVSRVIDRYGDGQGGHVRTESEVPLAAGLKSSSAAANATVLATLDALGVADEVDRVDAARLGVQAARDAGVTVTGAFDDAAASMLGGVAMTDNREDDLLFRDAVEWHAAVWTPPERAYSADADVARCERVSGLAEHVAALAAAGDYGTAMTVNGLAFCAALDFPTAPAVTALPHAAGVSLSGTGPSYVAVGDEDGIEEVSTRWHENPGTVRETTTQLAGARTT</sequence>
<comment type="catalytic activity">
    <reaction>
        <text>shikimate + ATP = 3-phosphoshikimate + ADP + H(+)</text>
        <dbReference type="Rhea" id="RHEA:13121"/>
        <dbReference type="ChEBI" id="CHEBI:15378"/>
        <dbReference type="ChEBI" id="CHEBI:30616"/>
        <dbReference type="ChEBI" id="CHEBI:36208"/>
        <dbReference type="ChEBI" id="CHEBI:145989"/>
        <dbReference type="ChEBI" id="CHEBI:456216"/>
        <dbReference type="EC" id="2.7.1.71"/>
    </reaction>
</comment>
<comment type="pathway">
    <text>Metabolic intermediate biosynthesis; chorismate biosynthesis; chorismate from D-erythrose 4-phosphate and phosphoenolpyruvate: step 5/7.</text>
</comment>
<comment type="subcellular location">
    <subcellularLocation>
        <location evidence="1">Cytoplasm</location>
    </subcellularLocation>
</comment>
<comment type="similarity">
    <text evidence="3">Belongs to the GHMP kinase family. Archaeal shikimate kinase subfamily.</text>
</comment>
<keyword id="KW-0028">Amino-acid biosynthesis</keyword>
<keyword id="KW-0057">Aromatic amino acid biosynthesis</keyword>
<keyword id="KW-0067">ATP-binding</keyword>
<keyword id="KW-0963">Cytoplasm</keyword>
<keyword id="KW-0418">Kinase</keyword>
<keyword id="KW-0547">Nucleotide-binding</keyword>
<keyword id="KW-1185">Reference proteome</keyword>
<keyword id="KW-0808">Transferase</keyword>
<name>AROK_HALSA</name>
<organism>
    <name type="scientific">Halobacterium salinarum (strain ATCC 700922 / JCM 11081 / NRC-1)</name>
    <name type="common">Halobacterium halobium</name>
    <dbReference type="NCBI Taxonomy" id="64091"/>
    <lineage>
        <taxon>Archaea</taxon>
        <taxon>Methanobacteriati</taxon>
        <taxon>Methanobacteriota</taxon>
        <taxon>Stenosarchaea group</taxon>
        <taxon>Halobacteria</taxon>
        <taxon>Halobacteriales</taxon>
        <taxon>Halobacteriaceae</taxon>
        <taxon>Halobacterium</taxon>
        <taxon>Halobacterium salinarum NRC-34001</taxon>
    </lineage>
</organism>
<accession>Q9HQB0</accession>
<gene>
    <name type="primary">aroK</name>
    <name type="ordered locus">VNG_1245C</name>
</gene>
<reference key="1">
    <citation type="journal article" date="2000" name="Proc. Natl. Acad. Sci. U.S.A.">
        <title>Genome sequence of Halobacterium species NRC-1.</title>
        <authorList>
            <person name="Ng W.V."/>
            <person name="Kennedy S.P."/>
            <person name="Mahairas G.G."/>
            <person name="Berquist B."/>
            <person name="Pan M."/>
            <person name="Shukla H.D."/>
            <person name="Lasky S.R."/>
            <person name="Baliga N.S."/>
            <person name="Thorsson V."/>
            <person name="Sbrogna J."/>
            <person name="Swartzell S."/>
            <person name="Weir D."/>
            <person name="Hall J."/>
            <person name="Dahl T.A."/>
            <person name="Welti R."/>
            <person name="Goo Y.A."/>
            <person name="Leithauser B."/>
            <person name="Keller K."/>
            <person name="Cruz R."/>
            <person name="Danson M.J."/>
            <person name="Hough D.W."/>
            <person name="Maddocks D.G."/>
            <person name="Jablonski P.E."/>
            <person name="Krebs M.P."/>
            <person name="Angevine C.M."/>
            <person name="Dale H."/>
            <person name="Isenbarger T.A."/>
            <person name="Peck R.F."/>
            <person name="Pohlschroder M."/>
            <person name="Spudich J.L."/>
            <person name="Jung K.-H."/>
            <person name="Alam M."/>
            <person name="Freitas T."/>
            <person name="Hou S."/>
            <person name="Daniels C.J."/>
            <person name="Dennis P.P."/>
            <person name="Omer A.D."/>
            <person name="Ebhardt H."/>
            <person name="Lowe T.M."/>
            <person name="Liang P."/>
            <person name="Riley M."/>
            <person name="Hood L."/>
            <person name="DasSarma S."/>
        </authorList>
    </citation>
    <scope>NUCLEOTIDE SEQUENCE [LARGE SCALE GENOMIC DNA]</scope>
    <source>
        <strain>ATCC 700922 / JCM 11081 / NRC-1</strain>
    </source>
</reference>
<feature type="chain" id="PRO_0000141572" description="Shikimate kinase">
    <location>
        <begin position="1"/>
        <end position="284"/>
    </location>
</feature>
<feature type="binding site" evidence="2">
    <location>
        <begin position="85"/>
        <end position="95"/>
    </location>
    <ligand>
        <name>ATP</name>
        <dbReference type="ChEBI" id="CHEBI:30616"/>
    </ligand>
</feature>
<evidence type="ECO:0000250" key="1"/>
<evidence type="ECO:0000255" key="2"/>
<evidence type="ECO:0000305" key="3"/>
<proteinExistence type="inferred from homology"/>
<dbReference type="EC" id="2.7.1.71"/>
<dbReference type="EMBL" id="AE004437">
    <property type="protein sequence ID" value="AAG19605.1"/>
    <property type="molecule type" value="Genomic_DNA"/>
</dbReference>
<dbReference type="PIR" id="A84280">
    <property type="entry name" value="A84280"/>
</dbReference>
<dbReference type="RefSeq" id="WP_010902901.1">
    <property type="nucleotide sequence ID" value="NC_002607.1"/>
</dbReference>
<dbReference type="SMR" id="Q9HQB0"/>
<dbReference type="FunCoup" id="Q9HQB0">
    <property type="interactions" value="54"/>
</dbReference>
<dbReference type="STRING" id="64091.VNG_1245C"/>
<dbReference type="PaxDb" id="64091-VNG_1245C"/>
<dbReference type="KEGG" id="hal:VNG_1245C"/>
<dbReference type="PATRIC" id="fig|64091.14.peg.953"/>
<dbReference type="HOGENOM" id="CLU_073768_0_0_2"/>
<dbReference type="InParanoid" id="Q9HQB0"/>
<dbReference type="OrthoDB" id="9602at2157"/>
<dbReference type="PhylomeDB" id="Q9HQB0"/>
<dbReference type="UniPathway" id="UPA00053">
    <property type="reaction ID" value="UER00088"/>
</dbReference>
<dbReference type="Proteomes" id="UP000000554">
    <property type="component" value="Chromosome"/>
</dbReference>
<dbReference type="GO" id="GO:0005737">
    <property type="term" value="C:cytoplasm"/>
    <property type="evidence" value="ECO:0007669"/>
    <property type="project" value="UniProtKB-SubCell"/>
</dbReference>
<dbReference type="GO" id="GO:0005524">
    <property type="term" value="F:ATP binding"/>
    <property type="evidence" value="ECO:0007669"/>
    <property type="project" value="UniProtKB-UniRule"/>
</dbReference>
<dbReference type="GO" id="GO:0004765">
    <property type="term" value="F:shikimate kinase activity"/>
    <property type="evidence" value="ECO:0007669"/>
    <property type="project" value="UniProtKB-UniRule"/>
</dbReference>
<dbReference type="GO" id="GO:0008652">
    <property type="term" value="P:amino acid biosynthetic process"/>
    <property type="evidence" value="ECO:0007669"/>
    <property type="project" value="UniProtKB-KW"/>
</dbReference>
<dbReference type="GO" id="GO:0009073">
    <property type="term" value="P:aromatic amino acid family biosynthetic process"/>
    <property type="evidence" value="ECO:0007669"/>
    <property type="project" value="UniProtKB-KW"/>
</dbReference>
<dbReference type="GO" id="GO:0009423">
    <property type="term" value="P:chorismate biosynthetic process"/>
    <property type="evidence" value="ECO:0007669"/>
    <property type="project" value="UniProtKB-UniRule"/>
</dbReference>
<dbReference type="Gene3D" id="3.30.230.10">
    <property type="match status" value="1"/>
</dbReference>
<dbReference type="HAMAP" id="MF_00370">
    <property type="entry name" value="Shik_kinase_arch"/>
    <property type="match status" value="1"/>
</dbReference>
<dbReference type="InterPro" id="IPR006204">
    <property type="entry name" value="GHMP_kinase_N_dom"/>
</dbReference>
<dbReference type="InterPro" id="IPR020568">
    <property type="entry name" value="Ribosomal_Su5_D2-typ_SF"/>
</dbReference>
<dbReference type="InterPro" id="IPR014721">
    <property type="entry name" value="Ribsml_uS5_D2-typ_fold_subgr"/>
</dbReference>
<dbReference type="InterPro" id="IPR010189">
    <property type="entry name" value="SK_arc"/>
</dbReference>
<dbReference type="NCBIfam" id="TIGR01920">
    <property type="entry name" value="Shik_kin_archae"/>
    <property type="match status" value="1"/>
</dbReference>
<dbReference type="PANTHER" id="PTHR20861">
    <property type="entry name" value="HOMOSERINE/4-DIPHOSPHOCYTIDYL-2-C-METHYL-D-ERYTHRITOL KINASE"/>
    <property type="match status" value="1"/>
</dbReference>
<dbReference type="PANTHER" id="PTHR20861:SF3">
    <property type="entry name" value="SHIKIMATE KINASE"/>
    <property type="match status" value="1"/>
</dbReference>
<dbReference type="Pfam" id="PF00288">
    <property type="entry name" value="GHMP_kinases_N"/>
    <property type="match status" value="1"/>
</dbReference>
<dbReference type="PIRSF" id="PIRSF005758">
    <property type="entry name" value="Shikimt_kin_arch"/>
    <property type="match status" value="1"/>
</dbReference>
<dbReference type="SUPFAM" id="SSF54211">
    <property type="entry name" value="Ribosomal protein S5 domain 2-like"/>
    <property type="match status" value="1"/>
</dbReference>
<protein>
    <recommendedName>
        <fullName>Shikimate kinase</fullName>
        <shortName>SK</shortName>
        <ecNumber>2.7.1.71</ecNumber>
    </recommendedName>
</protein>